<proteinExistence type="evidence at protein level"/>
<comment type="function">
    <text>D-mannose/D-glucose-binding lectin. Requires Ca(2+) and Mn(2+) ions for full activity.</text>
</comment>
<comment type="subunit">
    <text>Tetramer of two alpha and two beta chains.</text>
</comment>
<comment type="PTM">
    <text>The N-terminus of alpha chain is blocked. The alpha and beta chains are produced by proteolytic processing, with probably the loss of intervening amino acid(s).</text>
</comment>
<comment type="similarity">
    <text evidence="3">Belongs to the leguminous lectin family.</text>
</comment>
<name>LECA_LABPU</name>
<evidence type="ECO:0000250" key="1"/>
<evidence type="ECO:0000255" key="2"/>
<evidence type="ECO:0000305" key="3"/>
<dbReference type="PIR" id="A54864">
    <property type="entry name" value="A54864"/>
</dbReference>
<dbReference type="PIR" id="B54864">
    <property type="entry name" value="B54864"/>
</dbReference>
<dbReference type="SMR" id="P38662"/>
<dbReference type="GO" id="GO:0005537">
    <property type="term" value="F:D-mannose binding"/>
    <property type="evidence" value="ECO:0007669"/>
    <property type="project" value="UniProtKB-KW"/>
</dbReference>
<dbReference type="GO" id="GO:0046872">
    <property type="term" value="F:metal ion binding"/>
    <property type="evidence" value="ECO:0007669"/>
    <property type="project" value="UniProtKB-KW"/>
</dbReference>
<dbReference type="CDD" id="cd06899">
    <property type="entry name" value="lectin_legume_LecRK_Arcelin_ConA"/>
    <property type="match status" value="1"/>
</dbReference>
<dbReference type="Gene3D" id="2.60.120.200">
    <property type="match status" value="1"/>
</dbReference>
<dbReference type="InterPro" id="IPR013320">
    <property type="entry name" value="ConA-like_dom_sf"/>
</dbReference>
<dbReference type="InterPro" id="IPR016363">
    <property type="entry name" value="L-lectin"/>
</dbReference>
<dbReference type="InterPro" id="IPR000985">
    <property type="entry name" value="Lectin_LegA_CS"/>
</dbReference>
<dbReference type="InterPro" id="IPR019825">
    <property type="entry name" value="Lectin_legB_Mn/Ca_BS"/>
</dbReference>
<dbReference type="InterPro" id="IPR001220">
    <property type="entry name" value="Legume_lectin_dom"/>
</dbReference>
<dbReference type="InterPro" id="IPR050258">
    <property type="entry name" value="Leguminous_Lectin"/>
</dbReference>
<dbReference type="PANTHER" id="PTHR32401">
    <property type="entry name" value="CONCANAVALIN A-LIKE LECTIN FAMILY PROTEIN"/>
    <property type="match status" value="1"/>
</dbReference>
<dbReference type="PANTHER" id="PTHR32401:SF47">
    <property type="entry name" value="LEGUME LECTIN DOMAIN-CONTAINING PROTEIN"/>
    <property type="match status" value="1"/>
</dbReference>
<dbReference type="Pfam" id="PF00139">
    <property type="entry name" value="Lectin_legB"/>
    <property type="match status" value="1"/>
</dbReference>
<dbReference type="PIRSF" id="PIRSF002690">
    <property type="entry name" value="L-type_lectin_plant"/>
    <property type="match status" value="1"/>
</dbReference>
<dbReference type="SUPFAM" id="SSF49899">
    <property type="entry name" value="Concanavalin A-like lectins/glucanases"/>
    <property type="match status" value="1"/>
</dbReference>
<dbReference type="PROSITE" id="PS00308">
    <property type="entry name" value="LECTIN_LEGUME_ALPHA"/>
    <property type="match status" value="1"/>
</dbReference>
<dbReference type="PROSITE" id="PS00307">
    <property type="entry name" value="LECTIN_LEGUME_BETA"/>
    <property type="match status" value="1"/>
</dbReference>
<sequence>AQSLSFSFTKFDPNQEDLIFQGTATSKLDSAGNPVSSSAGRVLYSAPLRLWEDSAVLTSFDPTIYIFTNYTSRIADGLAFIAPPDSVISYHGGFLGLFPNAAESGIAESNVVAVEFDTDYLNPDYGDPNYIHIGIDVNSIRSKVTASWDWQNGKIATAHISYNSVSKRLSVTTYYPGRGKPATSYDIELHTVLPEWVRVGLSASTGQNIERNTVHSWSFTSSLWTNVAKVGVASISG</sequence>
<keyword id="KW-0106">Calcium</keyword>
<keyword id="KW-0903">Direct protein sequencing</keyword>
<keyword id="KW-0325">Glycoprotein</keyword>
<keyword id="KW-0430">Lectin</keyword>
<keyword id="KW-0464">Manganese</keyword>
<keyword id="KW-0465">Mannose-binding</keyword>
<keyword id="KW-0479">Metal-binding</keyword>
<accession>P38662</accession>
<organism>
    <name type="scientific">Lablab purpureus</name>
    <name type="common">Hyacinth bean</name>
    <name type="synonym">Dolichos lablab</name>
    <dbReference type="NCBI Taxonomy" id="35936"/>
    <lineage>
        <taxon>Eukaryota</taxon>
        <taxon>Viridiplantae</taxon>
        <taxon>Streptophyta</taxon>
        <taxon>Embryophyta</taxon>
        <taxon>Tracheophyta</taxon>
        <taxon>Spermatophyta</taxon>
        <taxon>Magnoliopsida</taxon>
        <taxon>eudicotyledons</taxon>
        <taxon>Gunneridae</taxon>
        <taxon>Pentapetalae</taxon>
        <taxon>rosids</taxon>
        <taxon>fabids</taxon>
        <taxon>Fabales</taxon>
        <taxon>Fabaceae</taxon>
        <taxon>Papilionoideae</taxon>
        <taxon>50 kb inversion clade</taxon>
        <taxon>NPAAA clade</taxon>
        <taxon>indigoferoid/millettioid clade</taxon>
        <taxon>Phaseoleae</taxon>
        <taxon>Lablab</taxon>
    </lineage>
</organism>
<protein>
    <recommendedName>
        <fullName>Lectin</fullName>
    </recommendedName>
    <component>
        <recommendedName>
            <fullName>Lectin alpha chain</fullName>
        </recommendedName>
    </component>
    <component>
        <recommendedName>
            <fullName>Lectin beta chain</fullName>
        </recommendedName>
    </component>
</protein>
<feature type="chain" id="PRO_0000017615" description="Lectin beta chain">
    <location>
        <begin position="1"/>
        <end position="105"/>
    </location>
</feature>
<feature type="chain" id="PRO_0000017616" description="Lectin alpha chain">
    <location>
        <begin position="106"/>
        <end position="237"/>
    </location>
</feature>
<feature type="binding site" evidence="1">
    <location>
        <position position="115"/>
    </location>
    <ligand>
        <name>Mn(2+)</name>
        <dbReference type="ChEBI" id="CHEBI:29035"/>
    </ligand>
</feature>
<feature type="binding site" evidence="1">
    <location>
        <position position="117"/>
    </location>
    <ligand>
        <name>Ca(2+)</name>
        <dbReference type="ChEBI" id="CHEBI:29108"/>
    </ligand>
</feature>
<feature type="binding site" evidence="1">
    <location>
        <position position="117"/>
    </location>
    <ligand>
        <name>Mn(2+)</name>
        <dbReference type="ChEBI" id="CHEBI:29035"/>
    </ligand>
</feature>
<feature type="binding site" evidence="1">
    <location>
        <position position="120"/>
    </location>
    <ligand>
        <name>Ca(2+)</name>
        <dbReference type="ChEBI" id="CHEBI:29108"/>
    </ligand>
</feature>
<feature type="binding site" evidence="1">
    <location>
        <position position="122"/>
    </location>
    <ligand>
        <name>Ca(2+)</name>
        <dbReference type="ChEBI" id="CHEBI:29108"/>
    </ligand>
</feature>
<feature type="binding site" evidence="1">
    <location>
        <position position="127"/>
    </location>
    <ligand>
        <name>Ca(2+)</name>
        <dbReference type="ChEBI" id="CHEBI:29108"/>
    </ligand>
</feature>
<feature type="binding site" evidence="1">
    <location>
        <position position="127"/>
    </location>
    <ligand>
        <name>Mn(2+)</name>
        <dbReference type="ChEBI" id="CHEBI:29035"/>
    </ligand>
</feature>
<feature type="binding site" evidence="1">
    <location>
        <position position="132"/>
    </location>
    <ligand>
        <name>Mn(2+)</name>
        <dbReference type="ChEBI" id="CHEBI:29035"/>
    </ligand>
</feature>
<feature type="modified residue" description="Blocked amino end (Ile)">
    <location>
        <position position="106"/>
    </location>
</feature>
<feature type="glycosylation site" description="N-linked (GlcNAc...) asparagine" evidence="2">
    <location>
        <position position="69"/>
    </location>
</feature>
<reference key="1">
    <citation type="journal article" date="1994" name="J. Biol. Chem.">
        <title>The complete primary structure of a unique mannose/glucose-specific lectin from field bean (Dolichos lab lab).</title>
        <authorList>
            <person name="Gowda L.R."/>
            <person name="Savithri H.S."/>
            <person name="Rajagopal Rao D."/>
        </authorList>
    </citation>
    <scope>PROTEIN SEQUENCE</scope>
    <source>
        <strain>cv. Lignosus</strain>
        <tissue>Seed</tissue>
    </source>
</reference>